<reference key="1">
    <citation type="journal article" date="1998" name="Gene">
        <title>Sequence of the putative alanine racemase operon in Staphylococcus aureus: insertional interruption of this operon reduces D-alanine substitution of lipoteichoic acid and autolysis.</title>
        <authorList>
            <person name="Kullik I."/>
            <person name="Jenni R."/>
            <person name="Berger-Baechi B."/>
        </authorList>
    </citation>
    <scope>NUCLEOTIDE SEQUENCE [GENOMIC DNA]</scope>
</reference>
<reference key="2">
    <citation type="book" date="2006" name="Gram positive pathogens, 2nd edition">
        <title>The Staphylococcus aureus NCTC 8325 genome.</title>
        <editorList>
            <person name="Fischetti V."/>
            <person name="Novick R."/>
            <person name="Ferretti J."/>
            <person name="Portnoy D."/>
            <person name="Rood J."/>
        </editorList>
        <authorList>
            <person name="Gillaspy A.F."/>
            <person name="Worrell V."/>
            <person name="Orvis J."/>
            <person name="Roe B.A."/>
            <person name="Dyer D.W."/>
            <person name="Iandolo J.J."/>
        </authorList>
    </citation>
    <scope>NUCLEOTIDE SEQUENCE [LARGE SCALE GENOMIC DNA]</scope>
    <source>
        <strain>NCTC 8325 / PS 47</strain>
    </source>
</reference>
<accession>Q9ZAH5</accession>
<accession>Q2FWI6</accession>
<sequence length="382" mass="42823">MSDKYYRSAYMNVDLNAVASNFKVFSTLHPNKTVMAVVKANAYGLGSVKVARHLMENGATFFAVATLDEAIELRMHGITAKILVLGVLPAKDIDKAIQHRVALTVPSKQWLKEAIKNISGEQEKKLWLHIKLDTGMGRLGIKDTKTYQEVIEIIQQYEQLVFEGVFTHFACADEPGDMTTEQYQRFKDMVNEAIKPEYIHCQNSAGSLLMDCQFCNAIRPGISLYGYYPSEYVQQKVKVHLKPSVQLIANVVQTKTLQAGESVSYGATYTATDPTTIALLPIGYADGYLRIMQGSFVNVNGHQCEVIGRVCMDQTIVKVPDQVKAGDSVILIDNHRESPQSVEVVAEKQHTINYEVLCNLSRRLPRIYHDGDQRFVTNELLK</sequence>
<dbReference type="EC" id="5.1.1.1" evidence="1"/>
<dbReference type="EMBL" id="Y16431">
    <property type="protein sequence ID" value="CAA76221.1"/>
    <property type="molecule type" value="Genomic_DNA"/>
</dbReference>
<dbReference type="EMBL" id="CP000253">
    <property type="protein sequence ID" value="ABD31339.1"/>
    <property type="molecule type" value="Genomic_DNA"/>
</dbReference>
<dbReference type="RefSeq" id="WP_001281145.1">
    <property type="nucleotide sequence ID" value="NZ_LS483365.1"/>
</dbReference>
<dbReference type="RefSeq" id="YP_500784.1">
    <property type="nucleotide sequence ID" value="NC_007795.1"/>
</dbReference>
<dbReference type="SMR" id="Q9ZAH5"/>
<dbReference type="STRING" id="93061.SAOUHSC_02305"/>
<dbReference type="PaxDb" id="1280-SAXN108_2315"/>
<dbReference type="GeneID" id="3920930"/>
<dbReference type="KEGG" id="sao:SAOUHSC_02305"/>
<dbReference type="PATRIC" id="fig|93061.5.peg.2089"/>
<dbReference type="eggNOG" id="COG0787">
    <property type="taxonomic scope" value="Bacteria"/>
</dbReference>
<dbReference type="HOGENOM" id="CLU_028393_2_1_9"/>
<dbReference type="OrthoDB" id="9813814at2"/>
<dbReference type="UniPathway" id="UPA00042">
    <property type="reaction ID" value="UER00497"/>
</dbReference>
<dbReference type="PRO" id="PR:Q9ZAH5"/>
<dbReference type="Proteomes" id="UP000008816">
    <property type="component" value="Chromosome"/>
</dbReference>
<dbReference type="GO" id="GO:0005829">
    <property type="term" value="C:cytosol"/>
    <property type="evidence" value="ECO:0000318"/>
    <property type="project" value="GO_Central"/>
</dbReference>
<dbReference type="GO" id="GO:0008784">
    <property type="term" value="F:alanine racemase activity"/>
    <property type="evidence" value="ECO:0000318"/>
    <property type="project" value="GO_Central"/>
</dbReference>
<dbReference type="GO" id="GO:0030170">
    <property type="term" value="F:pyridoxal phosphate binding"/>
    <property type="evidence" value="ECO:0000318"/>
    <property type="project" value="GO_Central"/>
</dbReference>
<dbReference type="GO" id="GO:0030632">
    <property type="term" value="P:D-alanine biosynthetic process"/>
    <property type="evidence" value="ECO:0000318"/>
    <property type="project" value="GO_Central"/>
</dbReference>
<dbReference type="GO" id="GO:0009252">
    <property type="term" value="P:peptidoglycan biosynthetic process"/>
    <property type="evidence" value="ECO:0000318"/>
    <property type="project" value="GO_Central"/>
</dbReference>
<dbReference type="CDD" id="cd00430">
    <property type="entry name" value="PLPDE_III_AR"/>
    <property type="match status" value="1"/>
</dbReference>
<dbReference type="FunFam" id="2.40.37.10:FF:000006">
    <property type="entry name" value="Alanine racemase"/>
    <property type="match status" value="1"/>
</dbReference>
<dbReference type="FunFam" id="3.20.20.10:FF:000002">
    <property type="entry name" value="Alanine racemase"/>
    <property type="match status" value="1"/>
</dbReference>
<dbReference type="Gene3D" id="3.20.20.10">
    <property type="entry name" value="Alanine racemase"/>
    <property type="match status" value="1"/>
</dbReference>
<dbReference type="Gene3D" id="2.40.37.10">
    <property type="entry name" value="Lyase, Ornithine Decarboxylase, Chain A, domain 1"/>
    <property type="match status" value="1"/>
</dbReference>
<dbReference type="HAMAP" id="MF_01201">
    <property type="entry name" value="Ala_racemase"/>
    <property type="match status" value="1"/>
</dbReference>
<dbReference type="InterPro" id="IPR000821">
    <property type="entry name" value="Ala_racemase"/>
</dbReference>
<dbReference type="InterPro" id="IPR009006">
    <property type="entry name" value="Ala_racemase/Decarboxylase_C"/>
</dbReference>
<dbReference type="InterPro" id="IPR011079">
    <property type="entry name" value="Ala_racemase_C"/>
</dbReference>
<dbReference type="InterPro" id="IPR001608">
    <property type="entry name" value="Ala_racemase_N"/>
</dbReference>
<dbReference type="InterPro" id="IPR020622">
    <property type="entry name" value="Ala_racemase_pyridoxalP-BS"/>
</dbReference>
<dbReference type="InterPro" id="IPR029066">
    <property type="entry name" value="PLP-binding_barrel"/>
</dbReference>
<dbReference type="NCBIfam" id="TIGR00492">
    <property type="entry name" value="alr"/>
    <property type="match status" value="1"/>
</dbReference>
<dbReference type="PANTHER" id="PTHR30511">
    <property type="entry name" value="ALANINE RACEMASE"/>
    <property type="match status" value="1"/>
</dbReference>
<dbReference type="PANTHER" id="PTHR30511:SF0">
    <property type="entry name" value="ALANINE RACEMASE, CATABOLIC-RELATED"/>
    <property type="match status" value="1"/>
</dbReference>
<dbReference type="Pfam" id="PF00842">
    <property type="entry name" value="Ala_racemase_C"/>
    <property type="match status" value="1"/>
</dbReference>
<dbReference type="Pfam" id="PF01168">
    <property type="entry name" value="Ala_racemase_N"/>
    <property type="match status" value="1"/>
</dbReference>
<dbReference type="PRINTS" id="PR00992">
    <property type="entry name" value="ALARACEMASE"/>
</dbReference>
<dbReference type="SMART" id="SM01005">
    <property type="entry name" value="Ala_racemase_C"/>
    <property type="match status" value="1"/>
</dbReference>
<dbReference type="SUPFAM" id="SSF50621">
    <property type="entry name" value="Alanine racemase C-terminal domain-like"/>
    <property type="match status" value="1"/>
</dbReference>
<dbReference type="SUPFAM" id="SSF51419">
    <property type="entry name" value="PLP-binding barrel"/>
    <property type="match status" value="1"/>
</dbReference>
<dbReference type="PROSITE" id="PS00395">
    <property type="entry name" value="ALANINE_RACEMASE"/>
    <property type="match status" value="1"/>
</dbReference>
<gene>
    <name type="primary">alr1</name>
    <name type="synonym">alr</name>
    <name type="ordered locus">SAOUHSC_02305</name>
</gene>
<feature type="chain" id="PRO_0000114573" description="Alanine racemase 1">
    <location>
        <begin position="1"/>
        <end position="382"/>
    </location>
</feature>
<feature type="active site" description="Proton acceptor; specific for D-alanine" evidence="1">
    <location>
        <position position="39"/>
    </location>
</feature>
<feature type="active site" description="Proton acceptor; specific for L-alanine" evidence="1">
    <location>
        <position position="265"/>
    </location>
</feature>
<feature type="binding site" evidence="1">
    <location>
        <position position="138"/>
    </location>
    <ligand>
        <name>substrate</name>
    </ligand>
</feature>
<feature type="binding site" evidence="1">
    <location>
        <position position="312"/>
    </location>
    <ligand>
        <name>substrate</name>
    </ligand>
</feature>
<feature type="modified residue" description="N6-(pyridoxal phosphate)lysine" evidence="1">
    <location>
        <position position="39"/>
    </location>
</feature>
<keyword id="KW-0413">Isomerase</keyword>
<keyword id="KW-0663">Pyridoxal phosphate</keyword>
<keyword id="KW-1185">Reference proteome</keyword>
<proteinExistence type="inferred from homology"/>
<protein>
    <recommendedName>
        <fullName evidence="1">Alanine racemase 1</fullName>
        <ecNumber evidence="1">5.1.1.1</ecNumber>
    </recommendedName>
</protein>
<organism>
    <name type="scientific">Staphylococcus aureus (strain NCTC 8325 / PS 47)</name>
    <dbReference type="NCBI Taxonomy" id="93061"/>
    <lineage>
        <taxon>Bacteria</taxon>
        <taxon>Bacillati</taxon>
        <taxon>Bacillota</taxon>
        <taxon>Bacilli</taxon>
        <taxon>Bacillales</taxon>
        <taxon>Staphylococcaceae</taxon>
        <taxon>Staphylococcus</taxon>
    </lineage>
</organism>
<evidence type="ECO:0000255" key="1">
    <source>
        <dbReference type="HAMAP-Rule" id="MF_01201"/>
    </source>
</evidence>
<name>ALR1_STAA8</name>
<comment type="function">
    <text evidence="1">Catalyzes the interconversion of L-alanine and D-alanine. May also act on other amino acids.</text>
</comment>
<comment type="catalytic activity">
    <reaction evidence="1">
        <text>L-alanine = D-alanine</text>
        <dbReference type="Rhea" id="RHEA:20249"/>
        <dbReference type="ChEBI" id="CHEBI:57416"/>
        <dbReference type="ChEBI" id="CHEBI:57972"/>
        <dbReference type="EC" id="5.1.1.1"/>
    </reaction>
</comment>
<comment type="cofactor">
    <cofactor evidence="1">
        <name>pyridoxal 5'-phosphate</name>
        <dbReference type="ChEBI" id="CHEBI:597326"/>
    </cofactor>
</comment>
<comment type="pathway">
    <text evidence="1">Amino-acid biosynthesis; D-alanine biosynthesis; D-alanine from L-alanine: step 1/1.</text>
</comment>
<comment type="similarity">
    <text evidence="1">Belongs to the alanine racemase family.</text>
</comment>